<gene>
    <name evidence="1" type="primary">nuoI</name>
    <name type="ordered locus">XF_0313</name>
</gene>
<reference key="1">
    <citation type="journal article" date="2000" name="Nature">
        <title>The genome sequence of the plant pathogen Xylella fastidiosa.</title>
        <authorList>
            <person name="Simpson A.J.G."/>
            <person name="Reinach F.C."/>
            <person name="Arruda P."/>
            <person name="Abreu F.A."/>
            <person name="Acencio M."/>
            <person name="Alvarenga R."/>
            <person name="Alves L.M.C."/>
            <person name="Araya J.E."/>
            <person name="Baia G.S."/>
            <person name="Baptista C.S."/>
            <person name="Barros M.H."/>
            <person name="Bonaccorsi E.D."/>
            <person name="Bordin S."/>
            <person name="Bove J.M."/>
            <person name="Briones M.R.S."/>
            <person name="Bueno M.R.P."/>
            <person name="Camargo A.A."/>
            <person name="Camargo L.E.A."/>
            <person name="Carraro D.M."/>
            <person name="Carrer H."/>
            <person name="Colauto N.B."/>
            <person name="Colombo C."/>
            <person name="Costa F.F."/>
            <person name="Costa M.C.R."/>
            <person name="Costa-Neto C.M."/>
            <person name="Coutinho L.L."/>
            <person name="Cristofani M."/>
            <person name="Dias-Neto E."/>
            <person name="Docena C."/>
            <person name="El-Dorry H."/>
            <person name="Facincani A.P."/>
            <person name="Ferreira A.J.S."/>
            <person name="Ferreira V.C.A."/>
            <person name="Ferro J.A."/>
            <person name="Fraga J.S."/>
            <person name="Franca S.C."/>
            <person name="Franco M.C."/>
            <person name="Frohme M."/>
            <person name="Furlan L.R."/>
            <person name="Garnier M."/>
            <person name="Goldman G.H."/>
            <person name="Goldman M.H.S."/>
            <person name="Gomes S.L."/>
            <person name="Gruber A."/>
            <person name="Ho P.L."/>
            <person name="Hoheisel J.D."/>
            <person name="Junqueira M.L."/>
            <person name="Kemper E.L."/>
            <person name="Kitajima J.P."/>
            <person name="Krieger J.E."/>
            <person name="Kuramae E.E."/>
            <person name="Laigret F."/>
            <person name="Lambais M.R."/>
            <person name="Leite L.C.C."/>
            <person name="Lemos E.G.M."/>
            <person name="Lemos M.V.F."/>
            <person name="Lopes S.A."/>
            <person name="Lopes C.R."/>
            <person name="Machado J.A."/>
            <person name="Machado M.A."/>
            <person name="Madeira A.M.B.N."/>
            <person name="Madeira H.M.F."/>
            <person name="Marino C.L."/>
            <person name="Marques M.V."/>
            <person name="Martins E.A.L."/>
            <person name="Martins E.M.F."/>
            <person name="Matsukuma A.Y."/>
            <person name="Menck C.F.M."/>
            <person name="Miracca E.C."/>
            <person name="Miyaki C.Y."/>
            <person name="Monteiro-Vitorello C.B."/>
            <person name="Moon D.H."/>
            <person name="Nagai M.A."/>
            <person name="Nascimento A.L.T.O."/>
            <person name="Netto L.E.S."/>
            <person name="Nhani A. Jr."/>
            <person name="Nobrega F.G."/>
            <person name="Nunes L.R."/>
            <person name="Oliveira M.A."/>
            <person name="de Oliveira M.C."/>
            <person name="de Oliveira R.C."/>
            <person name="Palmieri D.A."/>
            <person name="Paris A."/>
            <person name="Peixoto B.R."/>
            <person name="Pereira G.A.G."/>
            <person name="Pereira H.A. Jr."/>
            <person name="Pesquero J.B."/>
            <person name="Quaggio R.B."/>
            <person name="Roberto P.G."/>
            <person name="Rodrigues V."/>
            <person name="de Rosa A.J.M."/>
            <person name="de Rosa V.E. Jr."/>
            <person name="de Sa R.G."/>
            <person name="Santelli R.V."/>
            <person name="Sawasaki H.E."/>
            <person name="da Silva A.C.R."/>
            <person name="da Silva A.M."/>
            <person name="da Silva F.R."/>
            <person name="Silva W.A. Jr."/>
            <person name="da Silveira J.F."/>
            <person name="Silvestri M.L.Z."/>
            <person name="Siqueira W.J."/>
            <person name="de Souza A.A."/>
            <person name="de Souza A.P."/>
            <person name="Terenzi M.F."/>
            <person name="Truffi D."/>
            <person name="Tsai S.M."/>
            <person name="Tsuhako M.H."/>
            <person name="Vallada H."/>
            <person name="Van Sluys M.A."/>
            <person name="Verjovski-Almeida S."/>
            <person name="Vettore A.L."/>
            <person name="Zago M.A."/>
            <person name="Zatz M."/>
            <person name="Meidanis J."/>
            <person name="Setubal J.C."/>
        </authorList>
    </citation>
    <scope>NUCLEOTIDE SEQUENCE [LARGE SCALE GENOMIC DNA]</scope>
    <source>
        <strain>9a5c</strain>
    </source>
</reference>
<organism>
    <name type="scientific">Xylella fastidiosa (strain 9a5c)</name>
    <dbReference type="NCBI Taxonomy" id="160492"/>
    <lineage>
        <taxon>Bacteria</taxon>
        <taxon>Pseudomonadati</taxon>
        <taxon>Pseudomonadota</taxon>
        <taxon>Gammaproteobacteria</taxon>
        <taxon>Lysobacterales</taxon>
        <taxon>Lysobacteraceae</taxon>
        <taxon>Xylella</taxon>
    </lineage>
</organism>
<dbReference type="EC" id="7.1.1.-" evidence="1"/>
<dbReference type="EMBL" id="AE003849">
    <property type="protein sequence ID" value="AAF83124.1"/>
    <property type="molecule type" value="Genomic_DNA"/>
</dbReference>
<dbReference type="PIR" id="C82822">
    <property type="entry name" value="C82822"/>
</dbReference>
<dbReference type="SMR" id="Q9PGI7"/>
<dbReference type="STRING" id="160492.XF_0313"/>
<dbReference type="KEGG" id="xfa:XF_0313"/>
<dbReference type="eggNOG" id="COG1143">
    <property type="taxonomic scope" value="Bacteria"/>
</dbReference>
<dbReference type="HOGENOM" id="CLU_067218_5_1_6"/>
<dbReference type="Proteomes" id="UP000000812">
    <property type="component" value="Chromosome"/>
</dbReference>
<dbReference type="GO" id="GO:0005886">
    <property type="term" value="C:plasma membrane"/>
    <property type="evidence" value="ECO:0007669"/>
    <property type="project" value="UniProtKB-SubCell"/>
</dbReference>
<dbReference type="GO" id="GO:0051539">
    <property type="term" value="F:4 iron, 4 sulfur cluster binding"/>
    <property type="evidence" value="ECO:0007669"/>
    <property type="project" value="UniProtKB-KW"/>
</dbReference>
<dbReference type="GO" id="GO:0005506">
    <property type="term" value="F:iron ion binding"/>
    <property type="evidence" value="ECO:0007669"/>
    <property type="project" value="UniProtKB-UniRule"/>
</dbReference>
<dbReference type="GO" id="GO:0050136">
    <property type="term" value="F:NADH:ubiquinone reductase (non-electrogenic) activity"/>
    <property type="evidence" value="ECO:0007669"/>
    <property type="project" value="UniProtKB-UniRule"/>
</dbReference>
<dbReference type="GO" id="GO:0048038">
    <property type="term" value="F:quinone binding"/>
    <property type="evidence" value="ECO:0007669"/>
    <property type="project" value="UniProtKB-KW"/>
</dbReference>
<dbReference type="GO" id="GO:0009060">
    <property type="term" value="P:aerobic respiration"/>
    <property type="evidence" value="ECO:0007669"/>
    <property type="project" value="TreeGrafter"/>
</dbReference>
<dbReference type="FunFam" id="3.30.70.3270:FF:000003">
    <property type="entry name" value="NADH-quinone oxidoreductase subunit I"/>
    <property type="match status" value="1"/>
</dbReference>
<dbReference type="Gene3D" id="3.30.70.3270">
    <property type="match status" value="1"/>
</dbReference>
<dbReference type="HAMAP" id="MF_01351">
    <property type="entry name" value="NDH1_NuoI"/>
    <property type="match status" value="1"/>
</dbReference>
<dbReference type="InterPro" id="IPR017896">
    <property type="entry name" value="4Fe4S_Fe-S-bd"/>
</dbReference>
<dbReference type="InterPro" id="IPR017900">
    <property type="entry name" value="4Fe4S_Fe_S_CS"/>
</dbReference>
<dbReference type="InterPro" id="IPR010226">
    <property type="entry name" value="NADH_quinone_OxRdtase_chainI"/>
</dbReference>
<dbReference type="NCBIfam" id="TIGR01971">
    <property type="entry name" value="NuoI"/>
    <property type="match status" value="1"/>
</dbReference>
<dbReference type="NCBIfam" id="NF004538">
    <property type="entry name" value="PRK05888.1-4"/>
    <property type="match status" value="1"/>
</dbReference>
<dbReference type="NCBIfam" id="NF004539">
    <property type="entry name" value="PRK05888.1-5"/>
    <property type="match status" value="1"/>
</dbReference>
<dbReference type="PANTHER" id="PTHR10849:SF20">
    <property type="entry name" value="NADH DEHYDROGENASE [UBIQUINONE] IRON-SULFUR PROTEIN 8, MITOCHONDRIAL"/>
    <property type="match status" value="1"/>
</dbReference>
<dbReference type="PANTHER" id="PTHR10849">
    <property type="entry name" value="NADH DEHYDROGENASE UBIQUINONE IRON-SULFUR PROTEIN 8, MITOCHONDRIAL"/>
    <property type="match status" value="1"/>
</dbReference>
<dbReference type="Pfam" id="PF12838">
    <property type="entry name" value="Fer4_7"/>
    <property type="match status" value="1"/>
</dbReference>
<dbReference type="SUPFAM" id="SSF54862">
    <property type="entry name" value="4Fe-4S ferredoxins"/>
    <property type="match status" value="1"/>
</dbReference>
<dbReference type="PROSITE" id="PS00198">
    <property type="entry name" value="4FE4S_FER_1"/>
    <property type="match status" value="2"/>
</dbReference>
<dbReference type="PROSITE" id="PS51379">
    <property type="entry name" value="4FE4S_FER_2"/>
    <property type="match status" value="2"/>
</dbReference>
<keyword id="KW-0004">4Fe-4S</keyword>
<keyword id="KW-0997">Cell inner membrane</keyword>
<keyword id="KW-1003">Cell membrane</keyword>
<keyword id="KW-0408">Iron</keyword>
<keyword id="KW-0411">Iron-sulfur</keyword>
<keyword id="KW-0472">Membrane</keyword>
<keyword id="KW-0479">Metal-binding</keyword>
<keyword id="KW-0520">NAD</keyword>
<keyword id="KW-0874">Quinone</keyword>
<keyword id="KW-0677">Repeat</keyword>
<keyword id="KW-1278">Translocase</keyword>
<keyword id="KW-0830">Ubiquinone</keyword>
<evidence type="ECO:0000255" key="1">
    <source>
        <dbReference type="HAMAP-Rule" id="MF_01351"/>
    </source>
</evidence>
<protein>
    <recommendedName>
        <fullName evidence="1">NADH-quinone oxidoreductase subunit I</fullName>
        <ecNumber evidence="1">7.1.1.-</ecNumber>
    </recommendedName>
    <alternativeName>
        <fullName evidence="1">NADH dehydrogenase I subunit I</fullName>
    </alternativeName>
    <alternativeName>
        <fullName evidence="1">NDH-1 subunit I</fullName>
    </alternativeName>
</protein>
<feature type="chain" id="PRO_0000250956" description="NADH-quinone oxidoreductase subunit I">
    <location>
        <begin position="1"/>
        <end position="163"/>
    </location>
</feature>
<feature type="domain" description="4Fe-4S ferredoxin-type 1" evidence="1">
    <location>
        <begin position="54"/>
        <end position="84"/>
    </location>
</feature>
<feature type="domain" description="4Fe-4S ferredoxin-type 2" evidence="1">
    <location>
        <begin position="94"/>
        <end position="123"/>
    </location>
</feature>
<feature type="binding site" evidence="1">
    <location>
        <position position="64"/>
    </location>
    <ligand>
        <name>[4Fe-4S] cluster</name>
        <dbReference type="ChEBI" id="CHEBI:49883"/>
        <label>1</label>
    </ligand>
</feature>
<feature type="binding site" evidence="1">
    <location>
        <position position="67"/>
    </location>
    <ligand>
        <name>[4Fe-4S] cluster</name>
        <dbReference type="ChEBI" id="CHEBI:49883"/>
        <label>1</label>
    </ligand>
</feature>
<feature type="binding site" evidence="1">
    <location>
        <position position="70"/>
    </location>
    <ligand>
        <name>[4Fe-4S] cluster</name>
        <dbReference type="ChEBI" id="CHEBI:49883"/>
        <label>1</label>
    </ligand>
</feature>
<feature type="binding site" evidence="1">
    <location>
        <position position="74"/>
    </location>
    <ligand>
        <name>[4Fe-4S] cluster</name>
        <dbReference type="ChEBI" id="CHEBI:49883"/>
        <label>2</label>
    </ligand>
</feature>
<feature type="binding site" evidence="1">
    <location>
        <position position="103"/>
    </location>
    <ligand>
        <name>[4Fe-4S] cluster</name>
        <dbReference type="ChEBI" id="CHEBI:49883"/>
        <label>2</label>
    </ligand>
</feature>
<feature type="binding site" evidence="1">
    <location>
        <position position="106"/>
    </location>
    <ligand>
        <name>[4Fe-4S] cluster</name>
        <dbReference type="ChEBI" id="CHEBI:49883"/>
        <label>2</label>
    </ligand>
</feature>
<feature type="binding site" evidence="1">
    <location>
        <position position="109"/>
    </location>
    <ligand>
        <name>[4Fe-4S] cluster</name>
        <dbReference type="ChEBI" id="CHEBI:49883"/>
        <label>2</label>
    </ligand>
</feature>
<feature type="binding site" evidence="1">
    <location>
        <position position="113"/>
    </location>
    <ligand>
        <name>[4Fe-4S] cluster</name>
        <dbReference type="ChEBI" id="CHEBI:49883"/>
        <label>1</label>
    </ligand>
</feature>
<accession>Q9PGI7</accession>
<name>NUOI_XYLFA</name>
<proteinExistence type="inferred from homology"/>
<comment type="function">
    <text evidence="1">NDH-1 shuttles electrons from NADH, via FMN and iron-sulfur (Fe-S) centers, to quinones in the respiratory chain. The immediate electron acceptor for the enzyme in this species is believed to be ubiquinone. Couples the redox reaction to proton translocation (for every two electrons transferred, four hydrogen ions are translocated across the cytoplasmic membrane), and thus conserves the redox energy in a proton gradient.</text>
</comment>
<comment type="catalytic activity">
    <reaction evidence="1">
        <text>a quinone + NADH + 5 H(+)(in) = a quinol + NAD(+) + 4 H(+)(out)</text>
        <dbReference type="Rhea" id="RHEA:57888"/>
        <dbReference type="ChEBI" id="CHEBI:15378"/>
        <dbReference type="ChEBI" id="CHEBI:24646"/>
        <dbReference type="ChEBI" id="CHEBI:57540"/>
        <dbReference type="ChEBI" id="CHEBI:57945"/>
        <dbReference type="ChEBI" id="CHEBI:132124"/>
    </reaction>
</comment>
<comment type="cofactor">
    <cofactor evidence="1">
        <name>[4Fe-4S] cluster</name>
        <dbReference type="ChEBI" id="CHEBI:49883"/>
    </cofactor>
    <text evidence="1">Binds 2 [4Fe-4S] clusters per subunit.</text>
</comment>
<comment type="subunit">
    <text evidence="1">NDH-1 is composed of 14 different subunits. Subunits NuoA, H, J, K, L, M, N constitute the membrane sector of the complex.</text>
</comment>
<comment type="subcellular location">
    <subcellularLocation>
        <location evidence="1">Cell inner membrane</location>
        <topology evidence="1">Peripheral membrane protein</topology>
    </subcellularLocation>
</comment>
<comment type="similarity">
    <text evidence="1">Belongs to the complex I 23 kDa subunit family.</text>
</comment>
<sequence>MMNRVMHYFKSLLLLELLAGLWLTLKYTFRPKYTVLYPMEKFPQSPRFRGLHALRRYPNGEERCIACKLCEAVCPALAITIDSAKREDGTRRTTRYDIDLFKCIFCGFCEESCPVDSIVETHILEYHFEKRGENIVTKPQLLAIGDRFEAEIAERRAADAAFR</sequence>